<reference key="1">
    <citation type="journal article" date="1995" name="Arch. Microbiol.">
        <title>Cloning, nucleotide sequence, and expression of the gene encoding a novel dioxygenase involved in metabolism of carboxydiphenyl ethers in Pseudomonas pseudoalcaligenes POB310.</title>
        <authorList>
            <person name="Dehmel U."/>
            <person name="Engesser K.-H."/>
            <person name="Timmis K.N."/>
            <person name="Dwyer D.F."/>
        </authorList>
    </citation>
    <scope>NUCLEOTIDE SEQUENCE [GENOMIC DNA]</scope>
    <source>
        <strain>POB310</strain>
    </source>
</reference>
<feature type="chain" id="PRO_0000189399" description="Phenoxybenzoate dioxygenase subunit beta">
    <location>
        <begin position="1"/>
        <end position="319"/>
    </location>
</feature>
<feature type="domain" description="FAD-binding FR-type" evidence="3">
    <location>
        <begin position="7"/>
        <end position="109"/>
    </location>
</feature>
<feature type="domain" description="2Fe-2S ferredoxin-type" evidence="2">
    <location>
        <begin position="234"/>
        <end position="319"/>
    </location>
</feature>
<feature type="binding site" evidence="1">
    <location>
        <begin position="113"/>
        <end position="223"/>
    </location>
    <ligand>
        <name>NAD(+)</name>
        <dbReference type="ChEBI" id="CHEBI:57540"/>
    </ligand>
</feature>
<feature type="binding site" evidence="2">
    <location>
        <position position="268"/>
    </location>
    <ligand>
        <name>[2Fe-2S] cluster</name>
        <dbReference type="ChEBI" id="CHEBI:190135"/>
    </ligand>
</feature>
<feature type="binding site" evidence="2">
    <location>
        <position position="273"/>
    </location>
    <ligand>
        <name>[2Fe-2S] cluster</name>
        <dbReference type="ChEBI" id="CHEBI:190135"/>
    </ligand>
</feature>
<feature type="binding site" evidence="2">
    <location>
        <position position="276"/>
    </location>
    <ligand>
        <name>[2Fe-2S] cluster</name>
        <dbReference type="ChEBI" id="CHEBI:190135"/>
    </ligand>
</feature>
<feature type="binding site" evidence="2">
    <location>
        <position position="306"/>
    </location>
    <ligand>
        <name>[2Fe-2S] cluster</name>
        <dbReference type="ChEBI" id="CHEBI:190135"/>
    </ligand>
</feature>
<proteinExistence type="evidence at transcript level"/>
<keyword id="KW-0001">2Fe-2S</keyword>
<keyword id="KW-0058">Aromatic hydrocarbons catabolism</keyword>
<keyword id="KW-0249">Electron transport</keyword>
<keyword id="KW-0285">Flavoprotein</keyword>
<keyword id="KW-0288">FMN</keyword>
<keyword id="KW-0408">Iron</keyword>
<keyword id="KW-0411">Iron-sulfur</keyword>
<keyword id="KW-0479">Metal-binding</keyword>
<keyword id="KW-0520">NAD</keyword>
<keyword id="KW-0560">Oxidoreductase</keyword>
<keyword id="KW-0614">Plasmid</keyword>
<keyword id="KW-0813">Transport</keyword>
<evidence type="ECO:0000250" key="1"/>
<evidence type="ECO:0000255" key="2">
    <source>
        <dbReference type="PROSITE-ProRule" id="PRU00465"/>
    </source>
</evidence>
<evidence type="ECO:0000255" key="3">
    <source>
        <dbReference type="PROSITE-ProRule" id="PRU00716"/>
    </source>
</evidence>
<evidence type="ECO:0000305" key="4"/>
<protein>
    <recommendedName>
        <fullName>Phenoxybenzoate dioxygenase subunit beta</fullName>
        <ecNumber>1.-.-.-</ecNumber>
    </recommendedName>
    <alternativeName>
        <fullName>4-carboxydiphenyl ether;phenoxybenzoate dioxygenase subunit beta</fullName>
    </alternativeName>
</protein>
<geneLocation type="plasmid">
    <name>pPOB</name>
</geneLocation>
<accession>Q52186</accession>
<organism>
    <name type="scientific">Ectopseudomonas oleovorans</name>
    <name type="common">Pseudomonas oleovorans</name>
    <dbReference type="NCBI Taxonomy" id="301"/>
    <lineage>
        <taxon>Bacteria</taxon>
        <taxon>Pseudomonadati</taxon>
        <taxon>Pseudomonadota</taxon>
        <taxon>Gammaproteobacteria</taxon>
        <taxon>Pseudomonadales</taxon>
        <taxon>Pseudomonadaceae</taxon>
        <taxon>Ectopseudomonas</taxon>
    </lineage>
</organism>
<dbReference type="EC" id="1.-.-.-"/>
<dbReference type="EMBL" id="X78823">
    <property type="protein sequence ID" value="CAA55401.1"/>
    <property type="molecule type" value="Genomic_DNA"/>
</dbReference>
<dbReference type="PIR" id="S44172">
    <property type="entry name" value="S44172"/>
</dbReference>
<dbReference type="SMR" id="Q52186"/>
<dbReference type="UniPathway" id="UPA00730"/>
<dbReference type="GO" id="GO:0051537">
    <property type="term" value="F:2 iron, 2 sulfur cluster binding"/>
    <property type="evidence" value="ECO:0007669"/>
    <property type="project" value="UniProtKB-KW"/>
</dbReference>
<dbReference type="GO" id="GO:0046872">
    <property type="term" value="F:metal ion binding"/>
    <property type="evidence" value="ECO:0007669"/>
    <property type="project" value="UniProtKB-KW"/>
</dbReference>
<dbReference type="GO" id="GO:0016491">
    <property type="term" value="F:oxidoreductase activity"/>
    <property type="evidence" value="ECO:0007669"/>
    <property type="project" value="UniProtKB-KW"/>
</dbReference>
<dbReference type="GO" id="GO:0009056">
    <property type="term" value="P:catabolic process"/>
    <property type="evidence" value="ECO:0007669"/>
    <property type="project" value="UniProtKB-KW"/>
</dbReference>
<dbReference type="CDD" id="cd00207">
    <property type="entry name" value="fer2"/>
    <property type="match status" value="1"/>
</dbReference>
<dbReference type="CDD" id="cd06185">
    <property type="entry name" value="PDR_like"/>
    <property type="match status" value="1"/>
</dbReference>
<dbReference type="Gene3D" id="3.10.20.30">
    <property type="match status" value="1"/>
</dbReference>
<dbReference type="Gene3D" id="3.40.50.80">
    <property type="entry name" value="Nucleotide-binding domain of ferredoxin-NADP reductase (FNR) module"/>
    <property type="match status" value="1"/>
</dbReference>
<dbReference type="Gene3D" id="2.40.30.10">
    <property type="entry name" value="Translation factors"/>
    <property type="match status" value="1"/>
</dbReference>
<dbReference type="InterPro" id="IPR036010">
    <property type="entry name" value="2Fe-2S_ferredoxin-like_sf"/>
</dbReference>
<dbReference type="InterPro" id="IPR001041">
    <property type="entry name" value="2Fe-2S_ferredoxin-type"/>
</dbReference>
<dbReference type="InterPro" id="IPR006058">
    <property type="entry name" value="2Fe2S_fd_BS"/>
</dbReference>
<dbReference type="InterPro" id="IPR012675">
    <property type="entry name" value="Beta-grasp_dom_sf"/>
</dbReference>
<dbReference type="InterPro" id="IPR008333">
    <property type="entry name" value="Cbr1-like_FAD-bd_dom"/>
</dbReference>
<dbReference type="InterPro" id="IPR017927">
    <property type="entry name" value="FAD-bd_FR_type"/>
</dbReference>
<dbReference type="InterPro" id="IPR039261">
    <property type="entry name" value="FNR_nucleotide-bd"/>
</dbReference>
<dbReference type="InterPro" id="IPR050415">
    <property type="entry name" value="MRET"/>
</dbReference>
<dbReference type="InterPro" id="IPR017938">
    <property type="entry name" value="Riboflavin_synthase-like_b-brl"/>
</dbReference>
<dbReference type="PANTHER" id="PTHR47354:SF1">
    <property type="entry name" value="CARNITINE MONOOXYGENASE REDUCTASE SUBUNIT"/>
    <property type="match status" value="1"/>
</dbReference>
<dbReference type="PANTHER" id="PTHR47354">
    <property type="entry name" value="NADH OXIDOREDUCTASE HCR"/>
    <property type="match status" value="1"/>
</dbReference>
<dbReference type="Pfam" id="PF00970">
    <property type="entry name" value="FAD_binding_6"/>
    <property type="match status" value="1"/>
</dbReference>
<dbReference type="Pfam" id="PF00111">
    <property type="entry name" value="Fer2"/>
    <property type="match status" value="1"/>
</dbReference>
<dbReference type="PRINTS" id="PR00409">
    <property type="entry name" value="PHDIOXRDTASE"/>
</dbReference>
<dbReference type="SUPFAM" id="SSF54292">
    <property type="entry name" value="2Fe-2S ferredoxin-like"/>
    <property type="match status" value="1"/>
</dbReference>
<dbReference type="SUPFAM" id="SSF52343">
    <property type="entry name" value="Ferredoxin reductase-like, C-terminal NADP-linked domain"/>
    <property type="match status" value="1"/>
</dbReference>
<dbReference type="SUPFAM" id="SSF63380">
    <property type="entry name" value="Riboflavin synthase domain-like"/>
    <property type="match status" value="1"/>
</dbReference>
<dbReference type="PROSITE" id="PS00197">
    <property type="entry name" value="2FE2S_FER_1"/>
    <property type="match status" value="1"/>
</dbReference>
<dbReference type="PROSITE" id="PS51085">
    <property type="entry name" value="2FE2S_FER_2"/>
    <property type="match status" value="1"/>
</dbReference>
<dbReference type="PROSITE" id="PS51384">
    <property type="entry name" value="FAD_FR"/>
    <property type="match status" value="1"/>
</dbReference>
<gene>
    <name type="primary">pobB</name>
</gene>
<sequence>MSAAATMAPVSLRIHAIAYGADDVLLFDLRAPARDGLAPFDAGAHIDLRLPRGITRSYSLLNDPAERHRYVIGVKREPESRGGSAWLHADARVGALIEVDGPSNHFALDESAPHAVFIAGGIGITPLWSMVQRLEHLGTPWTLHYRARSRRGAALLDELAGHGDRVHLSFSDEGAPSLDLAAIVAAAPEGAHFYCCGPVPMLEAFEAACVGLDPARVHLEYFAAKEAPATEGGFVVHLARSGRTIPIAAGCTILDALQAGGVAVPSSCQQGVCGICETAVLAGVPDHRDLVLSDQERAAGRTMMICCSGSKTAELTLDL</sequence>
<comment type="function">
    <text>Degrades exclusively diarylether compounds having carboxyl groups in the 3- or 4-position. Yields a hemiacetal that spontaneously hydrolyzes to phenol and protocatechuate.</text>
</comment>
<comment type="cofactor">
    <cofactor evidence="1">
        <name>FMN</name>
        <dbReference type="ChEBI" id="CHEBI:58210"/>
    </cofactor>
</comment>
<comment type="pathway">
    <text>Aromatic compound metabolism; carboxydiphenyl ether degradation.</text>
</comment>
<comment type="subunit">
    <text>This dioxygenase system consists of two proteins: the alpha subunit (PobA) and a subunit (PobB) that acts as a ferredoxin and a ferredoxin reductase.</text>
</comment>
<comment type="induction">
    <text>By 3- or 4-carboxydiphenyl ether and by phenol.</text>
</comment>
<comment type="similarity">
    <text evidence="4">Belongs to the PDR/VanB family.</text>
</comment>
<name>POBB_ECTOL</name>